<accession>Q5W6Z9</accession>
<accession>Q0DJP4</accession>
<evidence type="ECO:0000250" key="1"/>
<evidence type="ECO:0000255" key="2"/>
<evidence type="ECO:0000255" key="3">
    <source>
        <dbReference type="PROSITE-ProRule" id="PRU00078"/>
    </source>
</evidence>
<evidence type="ECO:0000255" key="4">
    <source>
        <dbReference type="PROSITE-ProRule" id="PRU00079"/>
    </source>
</evidence>
<evidence type="ECO:0000305" key="5"/>
<keyword id="KW-0134">Cell wall</keyword>
<keyword id="KW-0961">Cell wall biogenesis/degradation</keyword>
<keyword id="KW-1015">Disulfide bond</keyword>
<keyword id="KW-0472">Membrane</keyword>
<keyword id="KW-1185">Reference proteome</keyword>
<keyword id="KW-0964">Secreted</keyword>
<keyword id="KW-0732">Signal</keyword>
<proteinExistence type="evidence at transcript level"/>
<comment type="function">
    <text evidence="1">May cause loosening and extension of plant cell walls by disrupting non-covalent bonding between cellulose microfibrils and matrix glucans. No enzymatic activity has been found. May be required for rapid internodal elongation in deepwater rice during submergence (By similarity).</text>
</comment>
<comment type="subcellular location">
    <subcellularLocation>
        <location evidence="1">Secreted</location>
        <location evidence="1">Cell wall</location>
    </subcellularLocation>
    <subcellularLocation>
        <location evidence="1">Membrane</location>
        <topology evidence="1">Peripheral membrane protein</topology>
    </subcellularLocation>
</comment>
<comment type="similarity">
    <text evidence="5">Belongs to the expansin family. Expansin B subfamily.</text>
</comment>
<comment type="online information" name="EXPANSIN homepage">
    <link uri="https://www.dept.psu.edu/biology/groups/expansins/index.htm"/>
</comment>
<name>EXB18_ORYSJ</name>
<sequence length="264" mass="27153">MNSKFQLILSTFVVIAAFTLLPRPCASIEFHRKLSSWSNGGATWYGAANGAGSDGGACGYQAAVDQAPFSSMIAAGSPSIYKSGLGCGSCYQVKCSGNSACSGNPVTVVLTDECPGGPCLSEPVHFDLSGTAFGAMANPGQADQLRAAGVLQIQYNRVPCNWGGVMLTFAVDAGSNPSYFAVLVKYENGDGDLSGMDLMQTGAGAAWTPMQQSWGAVWKLSAGAALQAPLSIRLTSSSGKTLVASNVIPSGWKPGASYTSTVNY</sequence>
<reference key="1">
    <citation type="journal article" date="2005" name="Mol. Genet. Genomics">
        <title>A fine physical map of the rice chromosome 5.</title>
        <authorList>
            <person name="Cheng C.-H."/>
            <person name="Chung M.C."/>
            <person name="Liu S.-M."/>
            <person name="Chen S.-K."/>
            <person name="Kao F.Y."/>
            <person name="Lin S.-J."/>
            <person name="Hsiao S.-H."/>
            <person name="Tseng I.C."/>
            <person name="Hsing Y.-I.C."/>
            <person name="Wu H.-P."/>
            <person name="Chen C.-S."/>
            <person name="Shaw J.-F."/>
            <person name="Wu J."/>
            <person name="Matsumoto T."/>
            <person name="Sasaki T."/>
            <person name="Chen H.-C."/>
            <person name="Chow T.-Y."/>
        </authorList>
    </citation>
    <scope>NUCLEOTIDE SEQUENCE [LARGE SCALE GENOMIC DNA]</scope>
    <source>
        <strain>cv. Nipponbare</strain>
    </source>
</reference>
<reference key="2">
    <citation type="journal article" date="2005" name="Nature">
        <title>The map-based sequence of the rice genome.</title>
        <authorList>
            <consortium name="International rice genome sequencing project (IRGSP)"/>
        </authorList>
    </citation>
    <scope>NUCLEOTIDE SEQUENCE [LARGE SCALE GENOMIC DNA]</scope>
    <source>
        <strain>cv. Nipponbare</strain>
    </source>
</reference>
<reference key="3">
    <citation type="journal article" date="2008" name="Nucleic Acids Res.">
        <title>The rice annotation project database (RAP-DB): 2008 update.</title>
        <authorList>
            <consortium name="The rice annotation project (RAP)"/>
        </authorList>
    </citation>
    <scope>GENOME REANNOTATION</scope>
    <source>
        <strain>cv. Nipponbare</strain>
    </source>
</reference>
<reference key="4">
    <citation type="journal article" date="2013" name="Rice">
        <title>Improvement of the Oryza sativa Nipponbare reference genome using next generation sequence and optical map data.</title>
        <authorList>
            <person name="Kawahara Y."/>
            <person name="de la Bastide M."/>
            <person name="Hamilton J.P."/>
            <person name="Kanamori H."/>
            <person name="McCombie W.R."/>
            <person name="Ouyang S."/>
            <person name="Schwartz D.C."/>
            <person name="Tanaka T."/>
            <person name="Wu J."/>
            <person name="Zhou S."/>
            <person name="Childs K.L."/>
            <person name="Davidson R.M."/>
            <person name="Lin H."/>
            <person name="Quesada-Ocampo L."/>
            <person name="Vaillancourt B."/>
            <person name="Sakai H."/>
            <person name="Lee S.S."/>
            <person name="Kim J."/>
            <person name="Numa H."/>
            <person name="Itoh T."/>
            <person name="Buell C.R."/>
            <person name="Matsumoto T."/>
        </authorList>
    </citation>
    <scope>GENOME REANNOTATION</scope>
    <source>
        <strain>cv. Nipponbare</strain>
    </source>
</reference>
<reference key="5">
    <citation type="journal article" date="2003" name="Science">
        <title>Collection, mapping, and annotation of over 28,000 cDNA clones from japonica rice.</title>
        <authorList>
            <consortium name="The rice full-length cDNA consortium"/>
        </authorList>
    </citation>
    <scope>NUCLEOTIDE SEQUENCE [LARGE SCALE MRNA]</scope>
    <source>
        <strain>cv. Nipponbare</strain>
    </source>
</reference>
<reference key="6">
    <citation type="journal article" date="2004" name="Plant Mol. Biol.">
        <title>Nomenclature for members of the expansin superfamily of genes and proteins.</title>
        <authorList>
            <person name="Kende H."/>
            <person name="Bradford K.J."/>
            <person name="Brummell D.A."/>
            <person name="Cho H.-T."/>
            <person name="Cosgrove D.J."/>
            <person name="Fleming A.J."/>
            <person name="Gehring C."/>
            <person name="Lee Y."/>
            <person name="McQueen-Mason S.J."/>
            <person name="Rose J.K.C."/>
            <person name="Voesenek L.A.C."/>
        </authorList>
    </citation>
    <scope>NOMENCLATURE</scope>
</reference>
<gene>
    <name type="primary">EXPB18</name>
    <name type="ordered locus">Os05g0246300</name>
    <name type="ordered locus">LOC_Os05g15690</name>
    <name type="ORF">OSJNBa0037H06.12</name>
</gene>
<protein>
    <recommendedName>
        <fullName>Expansin-B18</fullName>
    </recommendedName>
    <alternativeName>
        <fullName>Beta-expansin-18</fullName>
    </alternativeName>
    <alternativeName>
        <fullName>OsEXPB18</fullName>
    </alternativeName>
    <alternativeName>
        <fullName>OsaEXPb1.15</fullName>
    </alternativeName>
</protein>
<organism>
    <name type="scientific">Oryza sativa subsp. japonica</name>
    <name type="common">Rice</name>
    <dbReference type="NCBI Taxonomy" id="39947"/>
    <lineage>
        <taxon>Eukaryota</taxon>
        <taxon>Viridiplantae</taxon>
        <taxon>Streptophyta</taxon>
        <taxon>Embryophyta</taxon>
        <taxon>Tracheophyta</taxon>
        <taxon>Spermatophyta</taxon>
        <taxon>Magnoliopsida</taxon>
        <taxon>Liliopsida</taxon>
        <taxon>Poales</taxon>
        <taxon>Poaceae</taxon>
        <taxon>BOP clade</taxon>
        <taxon>Oryzoideae</taxon>
        <taxon>Oryzeae</taxon>
        <taxon>Oryzinae</taxon>
        <taxon>Oryza</taxon>
        <taxon>Oryza sativa</taxon>
    </lineage>
</organism>
<dbReference type="EMBL" id="AC119290">
    <property type="protein sequence ID" value="AAV43978.1"/>
    <property type="molecule type" value="Genomic_DNA"/>
</dbReference>
<dbReference type="EMBL" id="AP008211">
    <property type="protein sequence ID" value="BAF16929.1"/>
    <property type="molecule type" value="Genomic_DNA"/>
</dbReference>
<dbReference type="EMBL" id="AP014961">
    <property type="protein sequence ID" value="BAS93000.1"/>
    <property type="molecule type" value="Genomic_DNA"/>
</dbReference>
<dbReference type="EMBL" id="AK101313">
    <property type="status" value="NOT_ANNOTATED_CDS"/>
    <property type="molecule type" value="mRNA"/>
</dbReference>
<dbReference type="RefSeq" id="XP_015638415.1">
    <property type="nucleotide sequence ID" value="XM_015782929.1"/>
</dbReference>
<dbReference type="SMR" id="Q5W6Z9"/>
<dbReference type="FunCoup" id="Q5W6Z9">
    <property type="interactions" value="7"/>
</dbReference>
<dbReference type="STRING" id="39947.Q5W6Z9"/>
<dbReference type="PaxDb" id="39947-Q5W6Z9"/>
<dbReference type="EnsemblPlants" id="Os05t0246300-01">
    <property type="protein sequence ID" value="Os05t0246300-01"/>
    <property type="gene ID" value="Os05g0246300"/>
</dbReference>
<dbReference type="Gramene" id="Os05t0246300-01">
    <property type="protein sequence ID" value="Os05t0246300-01"/>
    <property type="gene ID" value="Os05g0246300"/>
</dbReference>
<dbReference type="KEGG" id="dosa:Os05g0246300"/>
<dbReference type="eggNOG" id="ENOG502QRTE">
    <property type="taxonomic scope" value="Eukaryota"/>
</dbReference>
<dbReference type="HOGENOM" id="CLU_027462_1_2_1"/>
<dbReference type="InParanoid" id="Q5W6Z9"/>
<dbReference type="OMA" id="ENENTAC"/>
<dbReference type="OrthoDB" id="406505at2759"/>
<dbReference type="Proteomes" id="UP000000763">
    <property type="component" value="Chromosome 5"/>
</dbReference>
<dbReference type="Proteomes" id="UP000059680">
    <property type="component" value="Chromosome 5"/>
</dbReference>
<dbReference type="GO" id="GO:0005576">
    <property type="term" value="C:extracellular region"/>
    <property type="evidence" value="ECO:0007669"/>
    <property type="project" value="UniProtKB-KW"/>
</dbReference>
<dbReference type="GO" id="GO:0016020">
    <property type="term" value="C:membrane"/>
    <property type="evidence" value="ECO:0007669"/>
    <property type="project" value="UniProtKB-SubCell"/>
</dbReference>
<dbReference type="GO" id="GO:0009828">
    <property type="term" value="P:plant-type cell wall loosening"/>
    <property type="evidence" value="ECO:0000250"/>
    <property type="project" value="UniProtKB"/>
</dbReference>
<dbReference type="GO" id="GO:0019953">
    <property type="term" value="P:sexual reproduction"/>
    <property type="evidence" value="ECO:0007669"/>
    <property type="project" value="InterPro"/>
</dbReference>
<dbReference type="CDD" id="cd22275">
    <property type="entry name" value="DPBB_EXPB_N"/>
    <property type="match status" value="1"/>
</dbReference>
<dbReference type="Gene3D" id="2.60.40.760">
    <property type="entry name" value="Expansin, cellulose-binding-like domain"/>
    <property type="match status" value="1"/>
</dbReference>
<dbReference type="Gene3D" id="2.40.40.10">
    <property type="entry name" value="RlpA-like domain"/>
    <property type="match status" value="1"/>
</dbReference>
<dbReference type="InterPro" id="IPR007118">
    <property type="entry name" value="Expan_Lol_pI"/>
</dbReference>
<dbReference type="InterPro" id="IPR007112">
    <property type="entry name" value="Expansin/allergen_DPBB_dom"/>
</dbReference>
<dbReference type="InterPro" id="IPR007117">
    <property type="entry name" value="Expansin_CBD"/>
</dbReference>
<dbReference type="InterPro" id="IPR036749">
    <property type="entry name" value="Expansin_CBD_sf"/>
</dbReference>
<dbReference type="InterPro" id="IPR005795">
    <property type="entry name" value="LolPI"/>
</dbReference>
<dbReference type="InterPro" id="IPR009009">
    <property type="entry name" value="RlpA-like_DPBB"/>
</dbReference>
<dbReference type="InterPro" id="IPR036908">
    <property type="entry name" value="RlpA-like_sf"/>
</dbReference>
<dbReference type="PANTHER" id="PTHR31692:SF76">
    <property type="entry name" value="EXPANSIN-B15"/>
    <property type="match status" value="1"/>
</dbReference>
<dbReference type="PANTHER" id="PTHR31692">
    <property type="entry name" value="EXPANSIN-B3"/>
    <property type="match status" value="1"/>
</dbReference>
<dbReference type="Pfam" id="PF03330">
    <property type="entry name" value="DPBB_1"/>
    <property type="match status" value="1"/>
</dbReference>
<dbReference type="Pfam" id="PF01357">
    <property type="entry name" value="Expansin_C"/>
    <property type="match status" value="1"/>
</dbReference>
<dbReference type="PRINTS" id="PR01225">
    <property type="entry name" value="EXPANSNFAMLY"/>
</dbReference>
<dbReference type="PRINTS" id="PR00829">
    <property type="entry name" value="LOLP1ALLERGN"/>
</dbReference>
<dbReference type="SMART" id="SM00837">
    <property type="entry name" value="DPBB_1"/>
    <property type="match status" value="1"/>
</dbReference>
<dbReference type="SUPFAM" id="SSF50685">
    <property type="entry name" value="Barwin-like endoglucanases"/>
    <property type="match status" value="1"/>
</dbReference>
<dbReference type="SUPFAM" id="SSF49590">
    <property type="entry name" value="PHL pollen allergen"/>
    <property type="match status" value="1"/>
</dbReference>
<dbReference type="PROSITE" id="PS50843">
    <property type="entry name" value="EXPANSIN_CBD"/>
    <property type="match status" value="1"/>
</dbReference>
<dbReference type="PROSITE" id="PS50842">
    <property type="entry name" value="EXPANSIN_EG45"/>
    <property type="match status" value="1"/>
</dbReference>
<feature type="signal peptide" evidence="2">
    <location>
        <begin position="1"/>
        <end position="27"/>
    </location>
</feature>
<feature type="chain" id="PRO_0000252028" description="Expansin-B18">
    <location>
        <begin position="28"/>
        <end position="264"/>
    </location>
</feature>
<feature type="domain" description="Expansin-like EG45" evidence="4">
    <location>
        <begin position="55"/>
        <end position="165"/>
    </location>
</feature>
<feature type="domain" description="Expansin-like CBD" evidence="3">
    <location>
        <begin position="178"/>
        <end position="260"/>
    </location>
</feature>
<feature type="disulfide bond" evidence="4">
    <location>
        <begin position="58"/>
        <end position="87"/>
    </location>
</feature>
<feature type="disulfide bond" evidence="4">
    <location>
        <begin position="90"/>
        <end position="160"/>
    </location>
</feature>
<feature type="disulfide bond" evidence="4">
    <location>
        <begin position="95"/>
        <end position="101"/>
    </location>
</feature>
<feature type="sequence conflict" description="In Ref. 5; AK101313." evidence="5" ref="5">
    <original>H</original>
    <variation>Y</variation>
    <location>
        <position position="31"/>
    </location>
</feature>